<evidence type="ECO:0000255" key="1">
    <source>
        <dbReference type="HAMAP-Rule" id="MF_00680"/>
    </source>
</evidence>
<comment type="function">
    <text evidence="1">May act as a double-stranded DNA (dsDNA) mimic. Probably regulates the activity of a dsDNA-binding protein.</text>
</comment>
<comment type="similarity">
    <text evidence="1">Belongs to the putative dsDNA mimic protein family.</text>
</comment>
<gene>
    <name type="ordered locus">VC0395_A0828</name>
    <name type="ordered locus">VC395_1327</name>
</gene>
<dbReference type="EMBL" id="CP000627">
    <property type="protein sequence ID" value="ABQ21719.1"/>
    <property type="molecule type" value="Genomic_DNA"/>
</dbReference>
<dbReference type="EMBL" id="CP001235">
    <property type="protein sequence ID" value="ACP09335.1"/>
    <property type="molecule type" value="Genomic_DNA"/>
</dbReference>
<dbReference type="RefSeq" id="WP_000818869.1">
    <property type="nucleotide sequence ID" value="NZ_JAACZH010000002.1"/>
</dbReference>
<dbReference type="SMR" id="A5F1Y1"/>
<dbReference type="KEGG" id="vco:VC0395_A0828"/>
<dbReference type="KEGG" id="vcr:VC395_1327"/>
<dbReference type="PATRIC" id="fig|345073.21.peg.1291"/>
<dbReference type="eggNOG" id="COG3099">
    <property type="taxonomic scope" value="Bacteria"/>
</dbReference>
<dbReference type="HOGENOM" id="CLU_143392_0_0_6"/>
<dbReference type="OrthoDB" id="5677388at2"/>
<dbReference type="Proteomes" id="UP000000249">
    <property type="component" value="Chromosome 2"/>
</dbReference>
<dbReference type="Gene3D" id="3.10.450.140">
    <property type="entry name" value="dsDNA mimic, putative"/>
    <property type="match status" value="1"/>
</dbReference>
<dbReference type="HAMAP" id="MF_00680">
    <property type="entry name" value="Put_dsDNA_mimic"/>
    <property type="match status" value="1"/>
</dbReference>
<dbReference type="InterPro" id="IPR007376">
    <property type="entry name" value="dsDNA_mimic_put"/>
</dbReference>
<dbReference type="InterPro" id="IPR036763">
    <property type="entry name" value="Put_dsDNA_mimic_sf"/>
</dbReference>
<dbReference type="NCBIfam" id="NF003469">
    <property type="entry name" value="PRK05094.1"/>
    <property type="match status" value="1"/>
</dbReference>
<dbReference type="Pfam" id="PF04269">
    <property type="entry name" value="DUF440"/>
    <property type="match status" value="1"/>
</dbReference>
<dbReference type="PIRSF" id="PIRSF004916">
    <property type="entry name" value="UCP004916"/>
    <property type="match status" value="1"/>
</dbReference>
<dbReference type="SUPFAM" id="SSF102816">
    <property type="entry name" value="Putative dsDNA mimic"/>
    <property type="match status" value="1"/>
</dbReference>
<name>Y2028_VIBC3</name>
<sequence length="106" mass="12174">MAELISIDDTIDTAYDIFLEMAPDNLEPADVILFTAQFDDRGAAELVDVGDDWDDQVGFEVDKEIYAEVRIGLVNEENDVLDDVFARMLISRDPDQKFCHMLWKRD</sequence>
<proteinExistence type="inferred from homology"/>
<organism>
    <name type="scientific">Vibrio cholerae serotype O1 (strain ATCC 39541 / Classical Ogawa 395 / O395)</name>
    <dbReference type="NCBI Taxonomy" id="345073"/>
    <lineage>
        <taxon>Bacteria</taxon>
        <taxon>Pseudomonadati</taxon>
        <taxon>Pseudomonadota</taxon>
        <taxon>Gammaproteobacteria</taxon>
        <taxon>Vibrionales</taxon>
        <taxon>Vibrionaceae</taxon>
        <taxon>Vibrio</taxon>
    </lineage>
</organism>
<reference key="1">
    <citation type="submission" date="2007-03" db="EMBL/GenBank/DDBJ databases">
        <authorList>
            <person name="Heidelberg J."/>
        </authorList>
    </citation>
    <scope>NUCLEOTIDE SEQUENCE [LARGE SCALE GENOMIC DNA]</scope>
    <source>
        <strain>ATCC 39541 / Classical Ogawa 395 / O395</strain>
    </source>
</reference>
<reference key="2">
    <citation type="journal article" date="2008" name="PLoS ONE">
        <title>A recalibrated molecular clock and independent origins for the cholera pandemic clones.</title>
        <authorList>
            <person name="Feng L."/>
            <person name="Reeves P.R."/>
            <person name="Lan R."/>
            <person name="Ren Y."/>
            <person name="Gao C."/>
            <person name="Zhou Z."/>
            <person name="Ren Y."/>
            <person name="Cheng J."/>
            <person name="Wang W."/>
            <person name="Wang J."/>
            <person name="Qian W."/>
            <person name="Li D."/>
            <person name="Wang L."/>
        </authorList>
    </citation>
    <scope>NUCLEOTIDE SEQUENCE [LARGE SCALE GENOMIC DNA]</scope>
    <source>
        <strain>ATCC 39541 / Classical Ogawa 395 / O395</strain>
    </source>
</reference>
<feature type="chain" id="PRO_1000072732" description="Putative double-stranded DNA mimic protein VC0395_A0828/VC395_1327">
    <location>
        <begin position="1"/>
        <end position="106"/>
    </location>
</feature>
<accession>A5F1Y1</accession>
<accession>C3LZW9</accession>
<protein>
    <recommendedName>
        <fullName evidence="1">Putative double-stranded DNA mimic protein VC0395_A0828/VC395_1327</fullName>
    </recommendedName>
</protein>